<keyword id="KW-0012">Acyltransferase</keyword>
<keyword id="KW-0997">Cell inner membrane</keyword>
<keyword id="KW-1003">Cell membrane</keyword>
<keyword id="KW-0444">Lipid biosynthesis</keyword>
<keyword id="KW-0443">Lipid metabolism</keyword>
<keyword id="KW-0472">Membrane</keyword>
<keyword id="KW-0594">Phospholipid biosynthesis</keyword>
<keyword id="KW-1208">Phospholipid metabolism</keyword>
<keyword id="KW-0808">Transferase</keyword>
<feature type="chain" id="PRO_1000123093" description="Glycerol-3-phosphate acyltransferase">
    <location>
        <begin position="1"/>
        <end position="806"/>
    </location>
</feature>
<feature type="short sequence motif" description="HXXXXD motif">
    <location>
        <begin position="305"/>
        <end position="310"/>
    </location>
</feature>
<organism>
    <name type="scientific">Salmonella heidelberg (strain SL476)</name>
    <dbReference type="NCBI Taxonomy" id="454169"/>
    <lineage>
        <taxon>Bacteria</taxon>
        <taxon>Pseudomonadati</taxon>
        <taxon>Pseudomonadota</taxon>
        <taxon>Gammaproteobacteria</taxon>
        <taxon>Enterobacterales</taxon>
        <taxon>Enterobacteriaceae</taxon>
        <taxon>Salmonella</taxon>
    </lineage>
</organism>
<reference key="1">
    <citation type="journal article" date="2011" name="J. Bacteriol.">
        <title>Comparative genomics of 28 Salmonella enterica isolates: evidence for CRISPR-mediated adaptive sublineage evolution.</title>
        <authorList>
            <person name="Fricke W.F."/>
            <person name="Mammel M.K."/>
            <person name="McDermott P.F."/>
            <person name="Tartera C."/>
            <person name="White D.G."/>
            <person name="Leclerc J.E."/>
            <person name="Ravel J."/>
            <person name="Cebula T.A."/>
        </authorList>
    </citation>
    <scope>NUCLEOTIDE SEQUENCE [LARGE SCALE GENOMIC DNA]</scope>
    <source>
        <strain>SL476</strain>
    </source>
</reference>
<evidence type="ECO:0000255" key="1">
    <source>
        <dbReference type="HAMAP-Rule" id="MF_00393"/>
    </source>
</evidence>
<comment type="catalytic activity">
    <reaction evidence="1">
        <text>sn-glycerol 3-phosphate + an acyl-CoA = a 1-acyl-sn-glycero-3-phosphate + CoA</text>
        <dbReference type="Rhea" id="RHEA:15325"/>
        <dbReference type="ChEBI" id="CHEBI:57287"/>
        <dbReference type="ChEBI" id="CHEBI:57597"/>
        <dbReference type="ChEBI" id="CHEBI:57970"/>
        <dbReference type="ChEBI" id="CHEBI:58342"/>
        <dbReference type="EC" id="2.3.1.15"/>
    </reaction>
</comment>
<comment type="pathway">
    <text evidence="1">Phospholipid metabolism; CDP-diacylglycerol biosynthesis; CDP-diacylglycerol from sn-glycerol 3-phosphate: step 1/3.</text>
</comment>
<comment type="subcellular location">
    <subcellularLocation>
        <location evidence="1">Cell inner membrane</location>
        <topology evidence="1">Peripheral membrane protein</topology>
        <orientation evidence="1">Cytoplasmic side</orientation>
    </subcellularLocation>
</comment>
<comment type="domain">
    <text evidence="1">The HXXXXD motif is essential for acyltransferase activity and may constitute the binding site for the phosphate moiety of the glycerol-3-phosphate.</text>
</comment>
<comment type="similarity">
    <text evidence="1">Belongs to the GPAT/DAPAT family.</text>
</comment>
<name>PLSB_SALHS</name>
<sequence>MSGWPRIYYKLLNLPLSILVKSKSIPAEPAQELGLDTSRPIMYVLPYNSKADLLTLRAQCLAHDLPDPLEPLEIDGALLPRYVFIHGGPRVFTYYTPKEESVKLFHDYLDLHRSNPALDVQMVPVSVMFGRAPGREKGEDNPPLRMLNGVQKFFAISWLGRDSFVRFSPSVSLRRMADEHGTDKIIAQKLARVARMHFARQRLAAVGPRLPARQDLFNKLLASKAIARAVEDEARSKKISHEKAQQNAIALMEEIAANFSYEMIRLTDRILGFTWNRLYQGINVHNAERVRQLAHDGHEIVYVPCHRSHMDYLLLSYVLYHQGLVPPHIAAGINLNFWPAGPIFRRLGAFFIRRTFKGNKLYSTVFREYLGELFSRGYSVEYFVEGGRSRTGRLLDPKTGTLSMTIQAMLRGGTRPITLVPIYIGYEHVMEVGTYAKELRGATKEKESLPQMLKGLSKLRNLGQGYVNFGEPMPLMTYLNQHVPEWRESIDPIEAIRPAWLTPTVNSIAADLMVRINNAGAANAMNLCCTALLASRQRSLTREQLTEQLDCYLDLMRNVPYSTDSTVPAASAGELIAHALQMNKFEVEKDTIGDIIILPREQAVLMTYYRNNIAHMLIMPSLMAAIITQHRRISRDALQQHVEALYPMLKAELFLRWEREELASVIDALASEMQRQGLITLQDDELHINPTHSRTLQLLAAGARETLQRYAITFWLLSANPSINRSTLEKESRTVAQRLSVLHGINAPEFFDKAVFSSLVLTLRDEGYISDTGDAEPAETMKIYQMLADLITSDVRLTIESATQGE</sequence>
<dbReference type="EC" id="2.3.1.15" evidence="1"/>
<dbReference type="EMBL" id="CP001120">
    <property type="protein sequence ID" value="ACF68268.1"/>
    <property type="molecule type" value="Genomic_DNA"/>
</dbReference>
<dbReference type="RefSeq" id="WP_000017360.1">
    <property type="nucleotide sequence ID" value="NC_011083.1"/>
</dbReference>
<dbReference type="SMR" id="B4TDL8"/>
<dbReference type="KEGG" id="seh:SeHA_C4577"/>
<dbReference type="HOGENOM" id="CLU_015407_0_0_6"/>
<dbReference type="UniPathway" id="UPA00557">
    <property type="reaction ID" value="UER00612"/>
</dbReference>
<dbReference type="Proteomes" id="UP000001866">
    <property type="component" value="Chromosome"/>
</dbReference>
<dbReference type="GO" id="GO:0005886">
    <property type="term" value="C:plasma membrane"/>
    <property type="evidence" value="ECO:0007669"/>
    <property type="project" value="UniProtKB-SubCell"/>
</dbReference>
<dbReference type="GO" id="GO:0004366">
    <property type="term" value="F:glycerol-3-phosphate O-acyltransferase activity"/>
    <property type="evidence" value="ECO:0007669"/>
    <property type="project" value="UniProtKB-UniRule"/>
</dbReference>
<dbReference type="GO" id="GO:0016024">
    <property type="term" value="P:CDP-diacylglycerol biosynthetic process"/>
    <property type="evidence" value="ECO:0007669"/>
    <property type="project" value="UniProtKB-UniRule"/>
</dbReference>
<dbReference type="GO" id="GO:0006631">
    <property type="term" value="P:fatty acid metabolic process"/>
    <property type="evidence" value="ECO:0007669"/>
    <property type="project" value="TreeGrafter"/>
</dbReference>
<dbReference type="CDD" id="cd07993">
    <property type="entry name" value="LPLAT_DHAPAT-like"/>
    <property type="match status" value="1"/>
</dbReference>
<dbReference type="HAMAP" id="MF_00393">
    <property type="entry name" value="Glyc3P_acyltrans"/>
    <property type="match status" value="1"/>
</dbReference>
<dbReference type="InterPro" id="IPR022284">
    <property type="entry name" value="GPAT/DHAPAT"/>
</dbReference>
<dbReference type="InterPro" id="IPR045520">
    <property type="entry name" value="GPAT/DHAPAT_C"/>
</dbReference>
<dbReference type="InterPro" id="IPR041728">
    <property type="entry name" value="GPAT/DHAPAT_LPLAT"/>
</dbReference>
<dbReference type="InterPro" id="IPR028354">
    <property type="entry name" value="GPAT_PlsB"/>
</dbReference>
<dbReference type="InterPro" id="IPR002123">
    <property type="entry name" value="Plipid/glycerol_acylTrfase"/>
</dbReference>
<dbReference type="NCBIfam" id="TIGR03703">
    <property type="entry name" value="plsB"/>
    <property type="match status" value="1"/>
</dbReference>
<dbReference type="NCBIfam" id="NF003441">
    <property type="entry name" value="PRK04974.1"/>
    <property type="match status" value="1"/>
</dbReference>
<dbReference type="PANTHER" id="PTHR12563:SF17">
    <property type="entry name" value="DIHYDROXYACETONE PHOSPHATE ACYLTRANSFERASE"/>
    <property type="match status" value="1"/>
</dbReference>
<dbReference type="PANTHER" id="PTHR12563">
    <property type="entry name" value="GLYCEROL-3-PHOSPHATE ACYLTRANSFERASE"/>
    <property type="match status" value="1"/>
</dbReference>
<dbReference type="Pfam" id="PF01553">
    <property type="entry name" value="Acyltransferase"/>
    <property type="match status" value="1"/>
</dbReference>
<dbReference type="Pfam" id="PF19277">
    <property type="entry name" value="GPAT_C"/>
    <property type="match status" value="1"/>
</dbReference>
<dbReference type="PIRSF" id="PIRSF500064">
    <property type="entry name" value="GPAT"/>
    <property type="match status" value="1"/>
</dbReference>
<dbReference type="PIRSF" id="PIRSF000437">
    <property type="entry name" value="GPAT_DHAPAT"/>
    <property type="match status" value="1"/>
</dbReference>
<dbReference type="SMART" id="SM00563">
    <property type="entry name" value="PlsC"/>
    <property type="match status" value="1"/>
</dbReference>
<dbReference type="SUPFAM" id="SSF69593">
    <property type="entry name" value="Glycerol-3-phosphate (1)-acyltransferase"/>
    <property type="match status" value="1"/>
</dbReference>
<proteinExistence type="inferred from homology"/>
<gene>
    <name evidence="1" type="primary">plsB</name>
    <name type="ordered locus">SeHA_C4577</name>
</gene>
<protein>
    <recommendedName>
        <fullName evidence="1">Glycerol-3-phosphate acyltransferase</fullName>
        <shortName evidence="1">GPAT</shortName>
        <ecNumber evidence="1">2.3.1.15</ecNumber>
    </recommendedName>
</protein>
<accession>B4TDL8</accession>